<proteinExistence type="evidence at transcript level"/>
<comment type="function">
    <text evidence="1">ATP-binding RNA helicase involved in translation initiation. Part of the 43S pre-initiation complex that is required for efficient initiation on mRNAs of higher eukaryotes with structured 5'-UTRs by promoting efficient NTPase-dependent 48S complex formation. Specifically binds to the 40S ribosome near the mRNA entrance. Does not possess a processive helicase activity.</text>
</comment>
<comment type="catalytic activity">
    <reaction evidence="1">
        <text>ATP + H2O = ADP + phosphate + H(+)</text>
        <dbReference type="Rhea" id="RHEA:13065"/>
        <dbReference type="ChEBI" id="CHEBI:15377"/>
        <dbReference type="ChEBI" id="CHEBI:15378"/>
        <dbReference type="ChEBI" id="CHEBI:30616"/>
        <dbReference type="ChEBI" id="CHEBI:43474"/>
        <dbReference type="ChEBI" id="CHEBI:456216"/>
        <dbReference type="EC" id="3.6.4.13"/>
    </reaction>
</comment>
<comment type="subunit">
    <text evidence="1">Part of the 43S pre-initiation complex (PIC).</text>
</comment>
<comment type="subcellular location">
    <subcellularLocation>
        <location evidence="1">Cytoplasm</location>
    </subcellularLocation>
</comment>
<comment type="similarity">
    <text evidence="1">Belongs to the DEAD box helicase family. DEAH subfamily.</text>
</comment>
<reference key="1">
    <citation type="submission" date="2007-01" db="EMBL/GenBank/DDBJ databases">
        <authorList>
            <consortium name="NIH - Xenopus Gene Collection (XGC) project"/>
        </authorList>
    </citation>
    <scope>NUCLEOTIDE SEQUENCE [LARGE SCALE MRNA]</scope>
    <source>
        <tissue>Embryo</tissue>
    </source>
</reference>
<evidence type="ECO:0000255" key="1">
    <source>
        <dbReference type="HAMAP-Rule" id="MF_03068"/>
    </source>
</evidence>
<evidence type="ECO:0000256" key="2">
    <source>
        <dbReference type="SAM" id="MobiDB-lite"/>
    </source>
</evidence>
<gene>
    <name evidence="1" type="primary">dhx29</name>
</gene>
<sequence>MGGKNKKNRHGSSTAVQGATAAANRPRAAAEPRPGGEDAAKKQTPRNSNVAPGSKESNKQGPKTYSFASSSDSGVSVNHDKSVLKVVIEAKLEKRIISLINEHKKLNSNKGTVSGRLTSKKLQDLYMALQKLSFKAEHIEEAMTNTVLYGGDLHAALDWLCLNLPDDALPEGFSQQFVEEEQRARAKFQAPPQRPSAANESATEKGEEGASLKGNPELTMKEWILRYAEQGSDDDDDDDDVKEEEKETTLEKFDPNERYLELTAKLLDARAQATATKQDKDKQGQKEAQERIRGYQQEMKSLEDHPLFNPAVKIPEVKSESKQPKPALPPSEDEPLNFNLFEKKENAPEEKAKKKPPLDIRNFDYTSRSWTGKSPKQFLIDWCRKHYSKSPNPSFEKVPVGKYWKSRVKIIKSHDDVMCVCPTIVTEDSMQAQHLAATLALYELTKGQSVHQLLPPTYRNVWLEWSDAEKQVQEQNKTESNKPRDQFITKLLNKLKVQQNQLKSCSQTQMMEDPEDSWENLACDEEQHETCPSPLLPDDLEPIRNIFRKSRDSMKYKRLLNDREQLPVFARGNFILETLKRHRVIVVAGETGSGKSTQVPQFLLEDLLFNGGSPGKCNIVCTQPRRISAMSLATRVCEELGCDSGPGGKNSLCGYQIRMESRTGEATRLLYCTTGILLRKLQEDSMLKNISHIIVDEVHERTVQSDFLLIILREILHKRSDLHLVLMSATVDCEKFSSYFTHCPIIRISGRTFPVEVFHLEDVVEATGFVLEQDSEYCQKFLEDEEEITLSVTGKGGSSKKYQEFIPAQSGTGLDLGARYQRYSSQTRHAVLYMNPNKINLDLILELLVFLDISPEYRNVEGAVLIFLPGLADIQQLYDILSSDKRFHDRRRYKLIALHSILSSQDQAEAFILPPAGTRKIVLATNIAETGITIPDVVFVIDAGRTKENRYHESSQMSSLVETFISKASALQRQGRAGRVRNGYCFRLYTRERFESFMEYSVPEILRVPLEELCLHIMKCDLGSPEDFLSKALDPPQLQVISNAMSLLRKIGACELSQPKLTPLGQHLAALPVNVKIGKMLIFGAIFGCLDAVATLAATMTEKSPFVTPIGEKDRADLAKSSMAVANSDHVTIFRAYLGWKAIRPEGYAAEMSYCRKNFLNRKALLTIEDVKQELIRLVRAAGFECPRSVEANGLSSAMKALSAEETSLLKAILTAGLYDNVGKILFTKSVDITEKLACIVETAQGKAQVHPSSVNRDLQIYGWLLYQEKVKYSKVFLRETTLISPFPVLLFGGDIAVQHRERLLTVDDWIHFQAPVKIAVIFKELRILIESVLKQKLENPKMSLKDDMILNIIKELIKTER</sequence>
<protein>
    <recommendedName>
        <fullName evidence="1">ATP-dependent RNA helicase dhx29</fullName>
        <ecNumber evidence="1">3.6.4.13</ecNumber>
    </recommendedName>
    <alternativeName>
        <fullName evidence="1">DEAH box protein 29</fullName>
    </alternativeName>
</protein>
<keyword id="KW-0067">ATP-binding</keyword>
<keyword id="KW-0175">Coiled coil</keyword>
<keyword id="KW-0963">Cytoplasm</keyword>
<keyword id="KW-0347">Helicase</keyword>
<keyword id="KW-0378">Hydrolase</keyword>
<keyword id="KW-0396">Initiation factor</keyword>
<keyword id="KW-0547">Nucleotide-binding</keyword>
<keyword id="KW-0648">Protein biosynthesis</keyword>
<keyword id="KW-1185">Reference proteome</keyword>
<name>DHX29_XENLA</name>
<organism>
    <name type="scientific">Xenopus laevis</name>
    <name type="common">African clawed frog</name>
    <dbReference type="NCBI Taxonomy" id="8355"/>
    <lineage>
        <taxon>Eukaryota</taxon>
        <taxon>Metazoa</taxon>
        <taxon>Chordata</taxon>
        <taxon>Craniata</taxon>
        <taxon>Vertebrata</taxon>
        <taxon>Euteleostomi</taxon>
        <taxon>Amphibia</taxon>
        <taxon>Batrachia</taxon>
        <taxon>Anura</taxon>
        <taxon>Pipoidea</taxon>
        <taxon>Pipidae</taxon>
        <taxon>Xenopodinae</taxon>
        <taxon>Xenopus</taxon>
        <taxon>Xenopus</taxon>
    </lineage>
</organism>
<dbReference type="EC" id="3.6.4.13" evidence="1"/>
<dbReference type="EMBL" id="BC131891">
    <property type="protein sequence ID" value="AAI31892.1"/>
    <property type="molecule type" value="mRNA"/>
</dbReference>
<dbReference type="RefSeq" id="NP_001091401.1">
    <property type="nucleotide sequence ID" value="NM_001097932.1"/>
</dbReference>
<dbReference type="SMR" id="A3KMI0"/>
<dbReference type="BioGRID" id="674539">
    <property type="interactions" value="1"/>
</dbReference>
<dbReference type="IntAct" id="A3KMI0">
    <property type="interactions" value="1"/>
</dbReference>
<dbReference type="GeneID" id="100049090"/>
<dbReference type="KEGG" id="xla:100049090"/>
<dbReference type="AGR" id="Xenbase:XB-GENE-995263"/>
<dbReference type="CTD" id="100049090"/>
<dbReference type="Xenbase" id="XB-GENE-995263">
    <property type="gene designation" value="dhx29.L"/>
</dbReference>
<dbReference type="OrthoDB" id="5600252at2759"/>
<dbReference type="Proteomes" id="UP000186698">
    <property type="component" value="Chromosome 1L"/>
</dbReference>
<dbReference type="Bgee" id="100049090">
    <property type="expression patterns" value="Expressed in pancreas and 19 other cell types or tissues"/>
</dbReference>
<dbReference type="GO" id="GO:0016282">
    <property type="term" value="C:eukaryotic 43S preinitiation complex"/>
    <property type="evidence" value="ECO:0000250"/>
    <property type="project" value="UniProtKB"/>
</dbReference>
<dbReference type="GO" id="GO:0005524">
    <property type="term" value="F:ATP binding"/>
    <property type="evidence" value="ECO:0007669"/>
    <property type="project" value="UniProtKB-UniRule"/>
</dbReference>
<dbReference type="GO" id="GO:0016887">
    <property type="term" value="F:ATP hydrolysis activity"/>
    <property type="evidence" value="ECO:0007669"/>
    <property type="project" value="RHEA"/>
</dbReference>
<dbReference type="GO" id="GO:0004386">
    <property type="term" value="F:helicase activity"/>
    <property type="evidence" value="ECO:0000318"/>
    <property type="project" value="GO_Central"/>
</dbReference>
<dbReference type="GO" id="GO:0043024">
    <property type="term" value="F:ribosomal small subunit binding"/>
    <property type="evidence" value="ECO:0000250"/>
    <property type="project" value="UniProtKB"/>
</dbReference>
<dbReference type="GO" id="GO:0003723">
    <property type="term" value="F:RNA binding"/>
    <property type="evidence" value="ECO:0000318"/>
    <property type="project" value="GO_Central"/>
</dbReference>
<dbReference type="GO" id="GO:0003724">
    <property type="term" value="F:RNA helicase activity"/>
    <property type="evidence" value="ECO:0007669"/>
    <property type="project" value="UniProtKB-UniRule"/>
</dbReference>
<dbReference type="GO" id="GO:0003743">
    <property type="term" value="F:translation initiation factor activity"/>
    <property type="evidence" value="ECO:0007669"/>
    <property type="project" value="UniProtKB-KW"/>
</dbReference>
<dbReference type="GO" id="GO:0045948">
    <property type="term" value="P:positive regulation of translational initiation"/>
    <property type="evidence" value="ECO:0007669"/>
    <property type="project" value="UniProtKB-UniRule"/>
</dbReference>
<dbReference type="CDD" id="cd17975">
    <property type="entry name" value="DEXHc_DHX29"/>
    <property type="match status" value="1"/>
</dbReference>
<dbReference type="CDD" id="cd18791">
    <property type="entry name" value="SF2_C_RHA"/>
    <property type="match status" value="1"/>
</dbReference>
<dbReference type="FunFam" id="3.40.50.300:FF:000325">
    <property type="entry name" value="ATP-dependent RNA helicase DHX29"/>
    <property type="match status" value="1"/>
</dbReference>
<dbReference type="FunFam" id="3.40.50.300:FF:000500">
    <property type="entry name" value="ATP-dependent RNA helicase DHX29"/>
    <property type="match status" value="1"/>
</dbReference>
<dbReference type="FunFam" id="1.20.120.1080:FF:000002">
    <property type="entry name" value="Putative ATP-dependent RNA helicase DHX36"/>
    <property type="match status" value="1"/>
</dbReference>
<dbReference type="Gene3D" id="1.20.120.1080">
    <property type="match status" value="1"/>
</dbReference>
<dbReference type="Gene3D" id="3.40.50.300">
    <property type="entry name" value="P-loop containing nucleotide triphosphate hydrolases"/>
    <property type="match status" value="2"/>
</dbReference>
<dbReference type="HAMAP" id="MF_03068">
    <property type="entry name" value="DHX29"/>
    <property type="match status" value="1"/>
</dbReference>
<dbReference type="InterPro" id="IPR011709">
    <property type="entry name" value="DEAD-box_helicase_OB_fold"/>
</dbReference>
<dbReference type="InterPro" id="IPR011545">
    <property type="entry name" value="DEAD/DEAH_box_helicase_dom"/>
</dbReference>
<dbReference type="InterPro" id="IPR034730">
    <property type="entry name" value="DHX29"/>
</dbReference>
<dbReference type="InterPro" id="IPR002464">
    <property type="entry name" value="DNA/RNA_helicase_DEAH_CS"/>
</dbReference>
<dbReference type="InterPro" id="IPR056328">
    <property type="entry name" value="DSRM_DHX29"/>
</dbReference>
<dbReference type="InterPro" id="IPR048333">
    <property type="entry name" value="HA2_WH"/>
</dbReference>
<dbReference type="InterPro" id="IPR007502">
    <property type="entry name" value="Helicase-assoc_dom"/>
</dbReference>
<dbReference type="InterPro" id="IPR014001">
    <property type="entry name" value="Helicase_ATP-bd"/>
</dbReference>
<dbReference type="InterPro" id="IPR001650">
    <property type="entry name" value="Helicase_C-like"/>
</dbReference>
<dbReference type="InterPro" id="IPR027417">
    <property type="entry name" value="P-loop_NTPase"/>
</dbReference>
<dbReference type="InterPro" id="IPR056890">
    <property type="entry name" value="UBA_DHX29-like"/>
</dbReference>
<dbReference type="PANTHER" id="PTHR18934">
    <property type="entry name" value="ATP-DEPENDENT RNA HELICASE"/>
    <property type="match status" value="1"/>
</dbReference>
<dbReference type="PANTHER" id="PTHR18934:SF264">
    <property type="entry name" value="ATP-DEPENDENT RNA HELICASE DHX29"/>
    <property type="match status" value="1"/>
</dbReference>
<dbReference type="Pfam" id="PF00270">
    <property type="entry name" value="DEAD"/>
    <property type="match status" value="1"/>
</dbReference>
<dbReference type="Pfam" id="PF24385">
    <property type="entry name" value="DSRM_DHX29"/>
    <property type="match status" value="1"/>
</dbReference>
<dbReference type="Pfam" id="PF21010">
    <property type="entry name" value="HA2_C"/>
    <property type="match status" value="1"/>
</dbReference>
<dbReference type="Pfam" id="PF04408">
    <property type="entry name" value="HA2_N"/>
    <property type="match status" value="1"/>
</dbReference>
<dbReference type="Pfam" id="PF00271">
    <property type="entry name" value="Helicase_C"/>
    <property type="match status" value="1"/>
</dbReference>
<dbReference type="Pfam" id="PF07717">
    <property type="entry name" value="OB_NTP_bind"/>
    <property type="match status" value="1"/>
</dbReference>
<dbReference type="Pfam" id="PF24899">
    <property type="entry name" value="UBA_DHX29"/>
    <property type="match status" value="1"/>
</dbReference>
<dbReference type="SMART" id="SM00487">
    <property type="entry name" value="DEXDc"/>
    <property type="match status" value="1"/>
</dbReference>
<dbReference type="SMART" id="SM00847">
    <property type="entry name" value="HA2"/>
    <property type="match status" value="1"/>
</dbReference>
<dbReference type="SMART" id="SM00490">
    <property type="entry name" value="HELICc"/>
    <property type="match status" value="1"/>
</dbReference>
<dbReference type="SUPFAM" id="SSF52540">
    <property type="entry name" value="P-loop containing nucleoside triphosphate hydrolases"/>
    <property type="match status" value="1"/>
</dbReference>
<dbReference type="PROSITE" id="PS00690">
    <property type="entry name" value="DEAH_ATP_HELICASE"/>
    <property type="match status" value="1"/>
</dbReference>
<dbReference type="PROSITE" id="PS51192">
    <property type="entry name" value="HELICASE_ATP_BIND_1"/>
    <property type="match status" value="1"/>
</dbReference>
<dbReference type="PROSITE" id="PS51194">
    <property type="entry name" value="HELICASE_CTER"/>
    <property type="match status" value="1"/>
</dbReference>
<accession>A3KMI0</accession>
<feature type="chain" id="PRO_0000366029" description="ATP-dependent RNA helicase dhx29">
    <location>
        <begin position="1"/>
        <end position="1362"/>
    </location>
</feature>
<feature type="domain" description="Helicase ATP-binding" evidence="1">
    <location>
        <begin position="576"/>
        <end position="749"/>
    </location>
</feature>
<feature type="domain" description="Helicase C-terminal" evidence="1">
    <location>
        <begin position="852"/>
        <end position="1021"/>
    </location>
</feature>
<feature type="region of interest" description="Disordered" evidence="2">
    <location>
        <begin position="1"/>
        <end position="76"/>
    </location>
</feature>
<feature type="region of interest" description="Disordered" evidence="2">
    <location>
        <begin position="182"/>
        <end position="215"/>
    </location>
</feature>
<feature type="region of interest" description="Disordered" evidence="2">
    <location>
        <begin position="229"/>
        <end position="257"/>
    </location>
</feature>
<feature type="region of interest" description="Disordered" evidence="2">
    <location>
        <begin position="317"/>
        <end position="336"/>
    </location>
</feature>
<feature type="coiled-coil region" evidence="1">
    <location>
        <begin position="89"/>
        <end position="109"/>
    </location>
</feature>
<feature type="coiled-coil region" evidence="1">
    <location>
        <begin position="285"/>
        <end position="305"/>
    </location>
</feature>
<feature type="short sequence motif" description="DEAH box" evidence="1">
    <location>
        <begin position="696"/>
        <end position="699"/>
    </location>
</feature>
<feature type="compositionally biased region" description="Basic residues" evidence="2">
    <location>
        <begin position="1"/>
        <end position="10"/>
    </location>
</feature>
<feature type="compositionally biased region" description="Low complexity" evidence="2">
    <location>
        <begin position="18"/>
        <end position="27"/>
    </location>
</feature>
<feature type="compositionally biased region" description="Basic and acidic residues" evidence="2">
    <location>
        <begin position="28"/>
        <end position="41"/>
    </location>
</feature>
<feature type="compositionally biased region" description="Low complexity" evidence="2">
    <location>
        <begin position="66"/>
        <end position="76"/>
    </location>
</feature>
<feature type="compositionally biased region" description="Acidic residues" evidence="2">
    <location>
        <begin position="231"/>
        <end position="242"/>
    </location>
</feature>
<feature type="compositionally biased region" description="Basic and acidic residues" evidence="2">
    <location>
        <begin position="243"/>
        <end position="257"/>
    </location>
</feature>
<feature type="binding site" evidence="1">
    <location>
        <begin position="589"/>
        <end position="596"/>
    </location>
    <ligand>
        <name>ATP</name>
        <dbReference type="ChEBI" id="CHEBI:30616"/>
    </ligand>
</feature>